<reference key="1">
    <citation type="submission" date="2008-05" db="EMBL/GenBank/DDBJ databases">
        <title>Complete sequence of chromosome of Geobacter lovleyi SZ.</title>
        <authorList>
            <consortium name="US DOE Joint Genome Institute"/>
            <person name="Lucas S."/>
            <person name="Copeland A."/>
            <person name="Lapidus A."/>
            <person name="Glavina del Rio T."/>
            <person name="Dalin E."/>
            <person name="Tice H."/>
            <person name="Bruce D."/>
            <person name="Goodwin L."/>
            <person name="Pitluck S."/>
            <person name="Chertkov O."/>
            <person name="Meincke L."/>
            <person name="Brettin T."/>
            <person name="Detter J.C."/>
            <person name="Han C."/>
            <person name="Tapia R."/>
            <person name="Kuske C.R."/>
            <person name="Schmutz J."/>
            <person name="Larimer F."/>
            <person name="Land M."/>
            <person name="Hauser L."/>
            <person name="Kyrpides N."/>
            <person name="Mikhailova N."/>
            <person name="Sung Y."/>
            <person name="Fletcher K.E."/>
            <person name="Ritalahti K.M."/>
            <person name="Loeffler F.E."/>
            <person name="Richardson P."/>
        </authorList>
    </citation>
    <scope>NUCLEOTIDE SEQUENCE [LARGE SCALE GENOMIC DNA]</scope>
    <source>
        <strain>ATCC BAA-1151 / DSM 17278 / SZ</strain>
    </source>
</reference>
<proteinExistence type="inferred from homology"/>
<organism>
    <name type="scientific">Trichlorobacter lovleyi (strain ATCC BAA-1151 / DSM 17278 / SZ)</name>
    <name type="common">Geobacter lovleyi</name>
    <dbReference type="NCBI Taxonomy" id="398767"/>
    <lineage>
        <taxon>Bacteria</taxon>
        <taxon>Pseudomonadati</taxon>
        <taxon>Thermodesulfobacteriota</taxon>
        <taxon>Desulfuromonadia</taxon>
        <taxon>Geobacterales</taxon>
        <taxon>Geobacteraceae</taxon>
        <taxon>Trichlorobacter</taxon>
    </lineage>
</organism>
<sequence length="210" mass="23669">MANILYITCNLKPREQSRSLTIGNEFLKRYSERHPEDRIDFLDLYRDPIQRIDTDVLNGWGKLRTGASFDLLSEDEVRKIGRIGALADQFVATDKYVFVTPMWNLGFPAELKMYIDTVCVVGKTFTYTESGAVGLLRGMGKKCLHIHSCGGFHCGSADDHSVPYLKSVMNFMGIEDFRSVVVEGMDALPHRAEEFMDKALAESREAAALF</sequence>
<comment type="function">
    <text evidence="1">Quinone reductase that provides resistance to thiol-specific stress caused by electrophilic quinones.</text>
</comment>
<comment type="function">
    <text evidence="1">Also exhibits azoreductase activity. Catalyzes the reductive cleavage of the azo bond in aromatic azo compounds to the corresponding amines.</text>
</comment>
<comment type="catalytic activity">
    <reaction evidence="1">
        <text>2 a quinone + NADH + H(+) = 2 a 1,4-benzosemiquinone + NAD(+)</text>
        <dbReference type="Rhea" id="RHEA:65952"/>
        <dbReference type="ChEBI" id="CHEBI:15378"/>
        <dbReference type="ChEBI" id="CHEBI:57540"/>
        <dbReference type="ChEBI" id="CHEBI:57945"/>
        <dbReference type="ChEBI" id="CHEBI:132124"/>
        <dbReference type="ChEBI" id="CHEBI:134225"/>
    </reaction>
</comment>
<comment type="catalytic activity">
    <reaction evidence="1">
        <text>N,N-dimethyl-1,4-phenylenediamine + anthranilate + 2 NAD(+) = 2-(4-dimethylaminophenyl)diazenylbenzoate + 2 NADH + 2 H(+)</text>
        <dbReference type="Rhea" id="RHEA:55872"/>
        <dbReference type="ChEBI" id="CHEBI:15378"/>
        <dbReference type="ChEBI" id="CHEBI:15783"/>
        <dbReference type="ChEBI" id="CHEBI:16567"/>
        <dbReference type="ChEBI" id="CHEBI:57540"/>
        <dbReference type="ChEBI" id="CHEBI:57945"/>
        <dbReference type="ChEBI" id="CHEBI:71579"/>
        <dbReference type="EC" id="1.7.1.17"/>
    </reaction>
</comment>
<comment type="cofactor">
    <cofactor evidence="1">
        <name>FMN</name>
        <dbReference type="ChEBI" id="CHEBI:58210"/>
    </cofactor>
    <text evidence="1">Binds 1 FMN per subunit.</text>
</comment>
<comment type="subunit">
    <text evidence="1">Homodimer.</text>
</comment>
<comment type="similarity">
    <text evidence="1">Belongs to the azoreductase type 1 family.</text>
</comment>
<keyword id="KW-0285">Flavoprotein</keyword>
<keyword id="KW-0288">FMN</keyword>
<keyword id="KW-0520">NAD</keyword>
<keyword id="KW-0560">Oxidoreductase</keyword>
<keyword id="KW-1185">Reference proteome</keyword>
<feature type="chain" id="PRO_1000138977" description="FMN-dependent NADH:quinone oxidoreductase">
    <location>
        <begin position="1"/>
        <end position="210"/>
    </location>
</feature>
<feature type="binding site" evidence="1">
    <location>
        <begin position="17"/>
        <end position="19"/>
    </location>
    <ligand>
        <name>FMN</name>
        <dbReference type="ChEBI" id="CHEBI:58210"/>
    </ligand>
</feature>
<feature type="binding site" evidence="1">
    <location>
        <begin position="102"/>
        <end position="105"/>
    </location>
    <ligand>
        <name>FMN</name>
        <dbReference type="ChEBI" id="CHEBI:58210"/>
    </ligand>
</feature>
<feature type="binding site" evidence="1">
    <location>
        <begin position="148"/>
        <end position="151"/>
    </location>
    <ligand>
        <name>FMN</name>
        <dbReference type="ChEBI" id="CHEBI:58210"/>
    </ligand>
</feature>
<accession>B3E8C4</accession>
<protein>
    <recommendedName>
        <fullName evidence="1">FMN-dependent NADH:quinone oxidoreductase</fullName>
        <ecNumber evidence="1">1.6.5.-</ecNumber>
    </recommendedName>
    <alternativeName>
        <fullName evidence="1">Azo-dye reductase</fullName>
    </alternativeName>
    <alternativeName>
        <fullName evidence="1">FMN-dependent NADH-azo compound oxidoreductase</fullName>
    </alternativeName>
    <alternativeName>
        <fullName evidence="1">FMN-dependent NADH-azoreductase</fullName>
        <ecNumber evidence="1">1.7.1.17</ecNumber>
    </alternativeName>
</protein>
<evidence type="ECO:0000255" key="1">
    <source>
        <dbReference type="HAMAP-Rule" id="MF_01216"/>
    </source>
</evidence>
<dbReference type="EC" id="1.6.5.-" evidence="1"/>
<dbReference type="EC" id="1.7.1.17" evidence="1"/>
<dbReference type="EMBL" id="CP001089">
    <property type="protein sequence ID" value="ACD95161.1"/>
    <property type="molecule type" value="Genomic_DNA"/>
</dbReference>
<dbReference type="RefSeq" id="WP_012469503.1">
    <property type="nucleotide sequence ID" value="NC_010814.1"/>
</dbReference>
<dbReference type="SMR" id="B3E8C4"/>
<dbReference type="STRING" id="398767.Glov_1442"/>
<dbReference type="KEGG" id="glo:Glov_1442"/>
<dbReference type="eggNOG" id="COG1182">
    <property type="taxonomic scope" value="Bacteria"/>
</dbReference>
<dbReference type="HOGENOM" id="CLU_088964_3_1_7"/>
<dbReference type="OrthoDB" id="9787136at2"/>
<dbReference type="Proteomes" id="UP000002420">
    <property type="component" value="Chromosome"/>
</dbReference>
<dbReference type="GO" id="GO:0009055">
    <property type="term" value="F:electron transfer activity"/>
    <property type="evidence" value="ECO:0007669"/>
    <property type="project" value="UniProtKB-UniRule"/>
</dbReference>
<dbReference type="GO" id="GO:0010181">
    <property type="term" value="F:FMN binding"/>
    <property type="evidence" value="ECO:0007669"/>
    <property type="project" value="UniProtKB-UniRule"/>
</dbReference>
<dbReference type="GO" id="GO:0016652">
    <property type="term" value="F:oxidoreductase activity, acting on NAD(P)H as acceptor"/>
    <property type="evidence" value="ECO:0007669"/>
    <property type="project" value="UniProtKB-UniRule"/>
</dbReference>
<dbReference type="GO" id="GO:0016655">
    <property type="term" value="F:oxidoreductase activity, acting on NAD(P)H, quinone or similar compound as acceptor"/>
    <property type="evidence" value="ECO:0007669"/>
    <property type="project" value="InterPro"/>
</dbReference>
<dbReference type="Gene3D" id="3.40.50.360">
    <property type="match status" value="1"/>
</dbReference>
<dbReference type="HAMAP" id="MF_01216">
    <property type="entry name" value="Azoreductase_type1"/>
    <property type="match status" value="1"/>
</dbReference>
<dbReference type="InterPro" id="IPR003680">
    <property type="entry name" value="Flavodoxin_fold"/>
</dbReference>
<dbReference type="InterPro" id="IPR029039">
    <property type="entry name" value="Flavoprotein-like_sf"/>
</dbReference>
<dbReference type="InterPro" id="IPR050104">
    <property type="entry name" value="FMN-dep_NADH:Q_OxRdtase_AzoR1"/>
</dbReference>
<dbReference type="InterPro" id="IPR023048">
    <property type="entry name" value="NADH:quinone_OxRdtase_FMN_depd"/>
</dbReference>
<dbReference type="PANTHER" id="PTHR43741">
    <property type="entry name" value="FMN-DEPENDENT NADH-AZOREDUCTASE 1"/>
    <property type="match status" value="1"/>
</dbReference>
<dbReference type="PANTHER" id="PTHR43741:SF7">
    <property type="entry name" value="FMN-DEPENDENT NADH:QUINONE OXIDOREDUCTASE"/>
    <property type="match status" value="1"/>
</dbReference>
<dbReference type="Pfam" id="PF02525">
    <property type="entry name" value="Flavodoxin_2"/>
    <property type="match status" value="1"/>
</dbReference>
<dbReference type="SUPFAM" id="SSF52218">
    <property type="entry name" value="Flavoproteins"/>
    <property type="match status" value="1"/>
</dbReference>
<name>AZOR_TRIL1</name>
<gene>
    <name evidence="1" type="primary">azoR</name>
    <name type="ordered locus">Glov_1442</name>
</gene>